<keyword id="KW-0025">Alternative splicing</keyword>
<keyword id="KW-0235">DNA replication</keyword>
<keyword id="KW-0238">DNA-binding</keyword>
<keyword id="KW-0539">Nucleus</keyword>
<keyword id="KW-0597">Phosphoprotein</keyword>
<keyword id="KW-1185">Reference proteome</keyword>
<accession>Q3UPE3</accession>
<accession>Q3V2Y5</accession>
<protein>
    <recommendedName>
        <fullName>RecQ-mediated genome instability protein 2</fullName>
    </recommendedName>
</protein>
<proteinExistence type="evidence at transcript level"/>
<sequence>MAAAASESLSSGGPGAVRLPRLPPLKVLAGQLRRHAEGGPGAWRLSRAAVGRAPLELVAVWMQGTVLAAEGGQARLRDSSGAFSVRGLERVPRGRPCLLPGKYVMVMGVVQACSPEPCLQAVKMTDLSDNPVHESMWELEVEDLHRNIP</sequence>
<comment type="function">
    <text evidence="2">Essential component of the RMI complex, a complex that plays an important role in the processing of homologous recombination intermediates. It is required to regulate sister chromatid segregation and to limit DNA crossover. Essential for the stability, localization, and function of BLM, TOP3A, and complexes containing BLM. In the RMI complex, it is required to target BLM to chromatin and stress-induced nuclear foci and mitotic phosphorylation of BLM.</text>
</comment>
<comment type="subunit">
    <text evidence="1">Component of the RMI complex, containing at least TOP3A, RMI1 and RMI2. The RMI complex interacts with BLM (By similarity).</text>
</comment>
<comment type="subcellular location">
    <subcellularLocation>
        <location evidence="1">Nucleus</location>
    </subcellularLocation>
    <text evidence="1">Colocalizes with BLM at nuclear DNA repair foci.</text>
</comment>
<comment type="alternative products">
    <event type="alternative splicing"/>
    <isoform>
        <id>Q3UPE3-1</id>
        <name>1</name>
        <sequence type="displayed"/>
    </isoform>
    <isoform>
        <id>Q3UPE3-2</id>
        <name>2</name>
        <sequence type="described" ref="VSP_027288"/>
    </isoform>
</comment>
<comment type="PTM">
    <text evidence="1">Phosphorylated during mitosis.</text>
</comment>
<comment type="similarity">
    <text evidence="4">Belongs to the RMI2 family.</text>
</comment>
<gene>
    <name type="primary">Rmi2</name>
    <name type="synonym">Gm929</name>
</gene>
<dbReference type="EMBL" id="AK080331">
    <property type="protein sequence ID" value="BAE43370.1"/>
    <property type="molecule type" value="mRNA"/>
</dbReference>
<dbReference type="EMBL" id="AK143588">
    <property type="protein sequence ID" value="BAE25452.1"/>
    <property type="molecule type" value="mRNA"/>
</dbReference>
<dbReference type="CCDS" id="CCDS49761.1">
    <molecule id="Q3UPE3-1"/>
</dbReference>
<dbReference type="RefSeq" id="NP_001156404.1">
    <molecule id="Q3UPE3-1"/>
    <property type="nucleotide sequence ID" value="NM_001162932.1"/>
</dbReference>
<dbReference type="SMR" id="Q3UPE3"/>
<dbReference type="BioGRID" id="230218">
    <property type="interactions" value="1"/>
</dbReference>
<dbReference type="ComplexPortal" id="CPX-3303">
    <property type="entry name" value="BTR double Holliday Junction dissolution complex"/>
</dbReference>
<dbReference type="FunCoup" id="Q3UPE3">
    <property type="interactions" value="1736"/>
</dbReference>
<dbReference type="STRING" id="10090.ENSMUSP00000042676"/>
<dbReference type="PhosphoSitePlus" id="Q3UPE3"/>
<dbReference type="PaxDb" id="10090-ENSMUSP00000042676"/>
<dbReference type="PeptideAtlas" id="Q3UPE3"/>
<dbReference type="ProteomicsDB" id="299836">
    <molecule id="Q3UPE3-1"/>
</dbReference>
<dbReference type="ProteomicsDB" id="299837">
    <molecule id="Q3UPE3-2"/>
</dbReference>
<dbReference type="Pumba" id="Q3UPE3"/>
<dbReference type="Antibodypedia" id="52376">
    <property type="antibodies" value="40 antibodies from 15 providers"/>
</dbReference>
<dbReference type="Ensembl" id="ENSMUST00000037913.9">
    <molecule id="Q3UPE3-1"/>
    <property type="protein sequence ID" value="ENSMUSP00000042676.8"/>
    <property type="gene ID" value="ENSMUSG00000037991.10"/>
</dbReference>
<dbReference type="Ensembl" id="ENSMUST00000181721.2">
    <molecule id="Q3UPE3-2"/>
    <property type="protein sequence ID" value="ENSMUSP00000137986.2"/>
    <property type="gene ID" value="ENSMUSG00000037991.10"/>
</dbReference>
<dbReference type="GeneID" id="223970"/>
<dbReference type="KEGG" id="mmu:223970"/>
<dbReference type="UCSC" id="uc007yek.2">
    <molecule id="Q3UPE3-1"/>
    <property type="organism name" value="mouse"/>
</dbReference>
<dbReference type="AGR" id="MGI:2685383"/>
<dbReference type="CTD" id="116028"/>
<dbReference type="MGI" id="MGI:2685383">
    <property type="gene designation" value="Rmi2"/>
</dbReference>
<dbReference type="VEuPathDB" id="HostDB:ENSMUSG00000037991"/>
<dbReference type="eggNOG" id="ENOG502S4AN">
    <property type="taxonomic scope" value="Eukaryota"/>
</dbReference>
<dbReference type="GeneTree" id="ENSGT00390000001653"/>
<dbReference type="HOGENOM" id="CLU_147474_0_0_1"/>
<dbReference type="InParanoid" id="Q3UPE3"/>
<dbReference type="OMA" id="RVSLVWM"/>
<dbReference type="OrthoDB" id="10024265at2759"/>
<dbReference type="PhylomeDB" id="Q3UPE3"/>
<dbReference type="TreeFam" id="TF332971"/>
<dbReference type="Reactome" id="R-MMU-5685938">
    <property type="pathway name" value="HDR through Single Strand Annealing (SSA)"/>
</dbReference>
<dbReference type="Reactome" id="R-MMU-5685942">
    <property type="pathway name" value="HDR through Homologous Recombination (HRR)"/>
</dbReference>
<dbReference type="Reactome" id="R-MMU-5693568">
    <property type="pathway name" value="Resolution of D-loop Structures through Holliday Junction Intermediates"/>
</dbReference>
<dbReference type="Reactome" id="R-MMU-5693579">
    <property type="pathway name" value="Homologous DNA Pairing and Strand Exchange"/>
</dbReference>
<dbReference type="Reactome" id="R-MMU-5693607">
    <property type="pathway name" value="Processing of DNA double-strand break ends"/>
</dbReference>
<dbReference type="Reactome" id="R-MMU-5693616">
    <property type="pathway name" value="Presynaptic phase of homologous DNA pairing and strand exchange"/>
</dbReference>
<dbReference type="Reactome" id="R-MMU-6804756">
    <property type="pathway name" value="Regulation of TP53 Activity through Phosphorylation"/>
</dbReference>
<dbReference type="Reactome" id="R-MMU-69473">
    <property type="pathway name" value="G2/M DNA damage checkpoint"/>
</dbReference>
<dbReference type="BioGRID-ORCS" id="223970">
    <property type="hits" value="6 hits in 79 CRISPR screens"/>
</dbReference>
<dbReference type="PRO" id="PR:Q3UPE3"/>
<dbReference type="Proteomes" id="UP000000589">
    <property type="component" value="Chromosome 16"/>
</dbReference>
<dbReference type="RNAct" id="Q3UPE3">
    <property type="molecule type" value="protein"/>
</dbReference>
<dbReference type="Bgee" id="ENSMUSG00000037991">
    <property type="expression patterns" value="Expressed in yolk sac and 51 other cell types or tissues"/>
</dbReference>
<dbReference type="GO" id="GO:0005829">
    <property type="term" value="C:cytosol"/>
    <property type="evidence" value="ECO:0007669"/>
    <property type="project" value="Ensembl"/>
</dbReference>
<dbReference type="GO" id="GO:0016607">
    <property type="term" value="C:nuclear speck"/>
    <property type="evidence" value="ECO:0007669"/>
    <property type="project" value="Ensembl"/>
</dbReference>
<dbReference type="GO" id="GO:0005634">
    <property type="term" value="C:nucleus"/>
    <property type="evidence" value="ECO:0000303"/>
    <property type="project" value="ComplexPortal"/>
</dbReference>
<dbReference type="GO" id="GO:0031422">
    <property type="term" value="C:RecQ family helicase-topoisomerase III complex"/>
    <property type="evidence" value="ECO:0000266"/>
    <property type="project" value="ComplexPortal"/>
</dbReference>
<dbReference type="GO" id="GO:0003677">
    <property type="term" value="F:DNA binding"/>
    <property type="evidence" value="ECO:0007669"/>
    <property type="project" value="UniProtKB-KW"/>
</dbReference>
<dbReference type="GO" id="GO:0006260">
    <property type="term" value="P:DNA replication"/>
    <property type="evidence" value="ECO:0007669"/>
    <property type="project" value="UniProtKB-KW"/>
</dbReference>
<dbReference type="GO" id="GO:0000724">
    <property type="term" value="P:double-strand break repair via homologous recombination"/>
    <property type="evidence" value="ECO:0000266"/>
    <property type="project" value="ComplexPortal"/>
</dbReference>
<dbReference type="GO" id="GO:0033045">
    <property type="term" value="P:regulation of sister chromatid segregation"/>
    <property type="evidence" value="ECO:0007669"/>
    <property type="project" value="Ensembl"/>
</dbReference>
<dbReference type="GO" id="GO:0071139">
    <property type="term" value="P:resolution of DNA recombination intermediates"/>
    <property type="evidence" value="ECO:0000266"/>
    <property type="project" value="ComplexPortal"/>
</dbReference>
<dbReference type="FunFam" id="2.40.50.140:FF:000224">
    <property type="entry name" value="RecQ mediated genome instability 2"/>
    <property type="match status" value="1"/>
</dbReference>
<dbReference type="Gene3D" id="2.40.50.140">
    <property type="entry name" value="Nucleic acid-binding proteins"/>
    <property type="match status" value="1"/>
</dbReference>
<dbReference type="InterPro" id="IPR012340">
    <property type="entry name" value="NA-bd_OB-fold"/>
</dbReference>
<dbReference type="InterPro" id="IPR032245">
    <property type="entry name" value="RMI2"/>
</dbReference>
<dbReference type="PANTHER" id="PTHR33962:SF1">
    <property type="entry name" value="RECQ-MEDIATED GENOME INSTABILITY PROTEIN 2"/>
    <property type="match status" value="1"/>
</dbReference>
<dbReference type="PANTHER" id="PTHR33962">
    <property type="entry name" value="RECQ-MEDIATED GENOME INSTABILITY PROTEIN 2 RMI2"/>
    <property type="match status" value="1"/>
</dbReference>
<dbReference type="Pfam" id="PF16100">
    <property type="entry name" value="RMI2"/>
    <property type="match status" value="1"/>
</dbReference>
<feature type="chain" id="PRO_0000297578" description="RecQ-mediated genome instability protein 2">
    <location>
        <begin position="1"/>
        <end position="149"/>
    </location>
</feature>
<feature type="DNA-binding region" description="OB">
    <location>
        <begin position="46"/>
        <end position="116"/>
    </location>
</feature>
<feature type="modified residue" description="Phosphoserine" evidence="2">
    <location>
        <position position="8"/>
    </location>
</feature>
<feature type="splice variant" id="VSP_027288" description="In isoform 2." evidence="3">
    <original>KYVMVMGVVQACSPEPCLQAVKMTDLSDNPVHESMWELEVEDLHRNIP</original>
    <variation>FQNLKETTQLKRTLLPASHNMLDLTLLPASYSMLELTYLHHAAC</variation>
    <location>
        <begin position="102"/>
        <end position="149"/>
    </location>
</feature>
<evidence type="ECO:0000250" key="1"/>
<evidence type="ECO:0000250" key="2">
    <source>
        <dbReference type="UniProtKB" id="Q96E14"/>
    </source>
</evidence>
<evidence type="ECO:0000303" key="3">
    <source>
    </source>
</evidence>
<evidence type="ECO:0000305" key="4"/>
<name>RMI2_MOUSE</name>
<organism>
    <name type="scientific">Mus musculus</name>
    <name type="common">Mouse</name>
    <dbReference type="NCBI Taxonomy" id="10090"/>
    <lineage>
        <taxon>Eukaryota</taxon>
        <taxon>Metazoa</taxon>
        <taxon>Chordata</taxon>
        <taxon>Craniata</taxon>
        <taxon>Vertebrata</taxon>
        <taxon>Euteleostomi</taxon>
        <taxon>Mammalia</taxon>
        <taxon>Eutheria</taxon>
        <taxon>Euarchontoglires</taxon>
        <taxon>Glires</taxon>
        <taxon>Rodentia</taxon>
        <taxon>Myomorpha</taxon>
        <taxon>Muroidea</taxon>
        <taxon>Muridae</taxon>
        <taxon>Murinae</taxon>
        <taxon>Mus</taxon>
        <taxon>Mus</taxon>
    </lineage>
</organism>
<reference key="1">
    <citation type="journal article" date="2005" name="Science">
        <title>The transcriptional landscape of the mammalian genome.</title>
        <authorList>
            <person name="Carninci P."/>
            <person name="Kasukawa T."/>
            <person name="Katayama S."/>
            <person name="Gough J."/>
            <person name="Frith M.C."/>
            <person name="Maeda N."/>
            <person name="Oyama R."/>
            <person name="Ravasi T."/>
            <person name="Lenhard B."/>
            <person name="Wells C."/>
            <person name="Kodzius R."/>
            <person name="Shimokawa K."/>
            <person name="Bajic V.B."/>
            <person name="Brenner S.E."/>
            <person name="Batalov S."/>
            <person name="Forrest A.R."/>
            <person name="Zavolan M."/>
            <person name="Davis M.J."/>
            <person name="Wilming L.G."/>
            <person name="Aidinis V."/>
            <person name="Allen J.E."/>
            <person name="Ambesi-Impiombato A."/>
            <person name="Apweiler R."/>
            <person name="Aturaliya R.N."/>
            <person name="Bailey T.L."/>
            <person name="Bansal M."/>
            <person name="Baxter L."/>
            <person name="Beisel K.W."/>
            <person name="Bersano T."/>
            <person name="Bono H."/>
            <person name="Chalk A.M."/>
            <person name="Chiu K.P."/>
            <person name="Choudhary V."/>
            <person name="Christoffels A."/>
            <person name="Clutterbuck D.R."/>
            <person name="Crowe M.L."/>
            <person name="Dalla E."/>
            <person name="Dalrymple B.P."/>
            <person name="de Bono B."/>
            <person name="Della Gatta G."/>
            <person name="di Bernardo D."/>
            <person name="Down T."/>
            <person name="Engstrom P."/>
            <person name="Fagiolini M."/>
            <person name="Faulkner G."/>
            <person name="Fletcher C.F."/>
            <person name="Fukushima T."/>
            <person name="Furuno M."/>
            <person name="Futaki S."/>
            <person name="Gariboldi M."/>
            <person name="Georgii-Hemming P."/>
            <person name="Gingeras T.R."/>
            <person name="Gojobori T."/>
            <person name="Green R.E."/>
            <person name="Gustincich S."/>
            <person name="Harbers M."/>
            <person name="Hayashi Y."/>
            <person name="Hensch T.K."/>
            <person name="Hirokawa N."/>
            <person name="Hill D."/>
            <person name="Huminiecki L."/>
            <person name="Iacono M."/>
            <person name="Ikeo K."/>
            <person name="Iwama A."/>
            <person name="Ishikawa T."/>
            <person name="Jakt M."/>
            <person name="Kanapin A."/>
            <person name="Katoh M."/>
            <person name="Kawasawa Y."/>
            <person name="Kelso J."/>
            <person name="Kitamura H."/>
            <person name="Kitano H."/>
            <person name="Kollias G."/>
            <person name="Krishnan S.P."/>
            <person name="Kruger A."/>
            <person name="Kummerfeld S.K."/>
            <person name="Kurochkin I.V."/>
            <person name="Lareau L.F."/>
            <person name="Lazarevic D."/>
            <person name="Lipovich L."/>
            <person name="Liu J."/>
            <person name="Liuni S."/>
            <person name="McWilliam S."/>
            <person name="Madan Babu M."/>
            <person name="Madera M."/>
            <person name="Marchionni L."/>
            <person name="Matsuda H."/>
            <person name="Matsuzawa S."/>
            <person name="Miki H."/>
            <person name="Mignone F."/>
            <person name="Miyake S."/>
            <person name="Morris K."/>
            <person name="Mottagui-Tabar S."/>
            <person name="Mulder N."/>
            <person name="Nakano N."/>
            <person name="Nakauchi H."/>
            <person name="Ng P."/>
            <person name="Nilsson R."/>
            <person name="Nishiguchi S."/>
            <person name="Nishikawa S."/>
            <person name="Nori F."/>
            <person name="Ohara O."/>
            <person name="Okazaki Y."/>
            <person name="Orlando V."/>
            <person name="Pang K.C."/>
            <person name="Pavan W.J."/>
            <person name="Pavesi G."/>
            <person name="Pesole G."/>
            <person name="Petrovsky N."/>
            <person name="Piazza S."/>
            <person name="Reed J."/>
            <person name="Reid J.F."/>
            <person name="Ring B.Z."/>
            <person name="Ringwald M."/>
            <person name="Rost B."/>
            <person name="Ruan Y."/>
            <person name="Salzberg S.L."/>
            <person name="Sandelin A."/>
            <person name="Schneider C."/>
            <person name="Schoenbach C."/>
            <person name="Sekiguchi K."/>
            <person name="Semple C.A."/>
            <person name="Seno S."/>
            <person name="Sessa L."/>
            <person name="Sheng Y."/>
            <person name="Shibata Y."/>
            <person name="Shimada H."/>
            <person name="Shimada K."/>
            <person name="Silva D."/>
            <person name="Sinclair B."/>
            <person name="Sperling S."/>
            <person name="Stupka E."/>
            <person name="Sugiura K."/>
            <person name="Sultana R."/>
            <person name="Takenaka Y."/>
            <person name="Taki K."/>
            <person name="Tammoja K."/>
            <person name="Tan S.L."/>
            <person name="Tang S."/>
            <person name="Taylor M.S."/>
            <person name="Tegner J."/>
            <person name="Teichmann S.A."/>
            <person name="Ueda H.R."/>
            <person name="van Nimwegen E."/>
            <person name="Verardo R."/>
            <person name="Wei C.L."/>
            <person name="Yagi K."/>
            <person name="Yamanishi H."/>
            <person name="Zabarovsky E."/>
            <person name="Zhu S."/>
            <person name="Zimmer A."/>
            <person name="Hide W."/>
            <person name="Bult C."/>
            <person name="Grimmond S.M."/>
            <person name="Teasdale R.D."/>
            <person name="Liu E.T."/>
            <person name="Brusic V."/>
            <person name="Quackenbush J."/>
            <person name="Wahlestedt C."/>
            <person name="Mattick J.S."/>
            <person name="Hume D.A."/>
            <person name="Kai C."/>
            <person name="Sasaki D."/>
            <person name="Tomaru Y."/>
            <person name="Fukuda S."/>
            <person name="Kanamori-Katayama M."/>
            <person name="Suzuki M."/>
            <person name="Aoki J."/>
            <person name="Arakawa T."/>
            <person name="Iida J."/>
            <person name="Imamura K."/>
            <person name="Itoh M."/>
            <person name="Kato T."/>
            <person name="Kawaji H."/>
            <person name="Kawagashira N."/>
            <person name="Kawashima T."/>
            <person name="Kojima M."/>
            <person name="Kondo S."/>
            <person name="Konno H."/>
            <person name="Nakano K."/>
            <person name="Ninomiya N."/>
            <person name="Nishio T."/>
            <person name="Okada M."/>
            <person name="Plessy C."/>
            <person name="Shibata K."/>
            <person name="Shiraki T."/>
            <person name="Suzuki S."/>
            <person name="Tagami M."/>
            <person name="Waki K."/>
            <person name="Watahiki A."/>
            <person name="Okamura-Oho Y."/>
            <person name="Suzuki H."/>
            <person name="Kawai J."/>
            <person name="Hayashizaki Y."/>
        </authorList>
    </citation>
    <scope>NUCLEOTIDE SEQUENCE [LARGE SCALE MRNA] (ISOFORMS 1 AND 2)</scope>
    <source>
        <strain>C57BL/6J</strain>
        <tissue>Spleen</tissue>
        <tissue>Thymus</tissue>
    </source>
</reference>